<name>PHTD_COMTE</name>
<gene>
    <name type="primary">phtD</name>
</gene>
<keyword id="KW-0058">Aromatic hydrocarbons catabolism</keyword>
<keyword id="KW-0210">Decarboxylase</keyword>
<keyword id="KW-0456">Lyase</keyword>
<dbReference type="EC" id="4.1.1.55"/>
<dbReference type="EMBL" id="D16537">
    <property type="protein sequence ID" value="BAA03974.1"/>
    <property type="molecule type" value="Genomic_DNA"/>
</dbReference>
<dbReference type="SMR" id="Q59727"/>
<dbReference type="UniPathway" id="UPA00726">
    <property type="reaction ID" value="UER00730"/>
</dbReference>
<dbReference type="GO" id="GO:0018796">
    <property type="term" value="F:4,5-dihydroxyphthalate decarboxylase activity"/>
    <property type="evidence" value="ECO:0007669"/>
    <property type="project" value="UniProtKB-EC"/>
</dbReference>
<dbReference type="GO" id="GO:0046239">
    <property type="term" value="P:phthalate catabolic process"/>
    <property type="evidence" value="ECO:0007669"/>
    <property type="project" value="UniProtKB-UniPathway"/>
</dbReference>
<dbReference type="Gene3D" id="3.40.190.10">
    <property type="entry name" value="Periplasmic binding protein-like II"/>
    <property type="match status" value="1"/>
</dbReference>
<dbReference type="Pfam" id="PF12974">
    <property type="entry name" value="Phosphonate-bd"/>
    <property type="match status" value="1"/>
</dbReference>
<dbReference type="SUPFAM" id="SSF53850">
    <property type="entry name" value="Periplasmic binding protein-like II"/>
    <property type="match status" value="1"/>
</dbReference>
<feature type="chain" id="PRO_0000058411" description="4,5-dihydroxyphthalate decarboxylase">
    <location>
        <begin position="1"/>
        <end position="330"/>
    </location>
</feature>
<proteinExistence type="predicted"/>
<reference key="1">
    <citation type="journal article" date="1994" name="J. Ferment. Bioeng.">
        <title>Identification of the metabolic intermediates of phthalate by Tn5 mutants of Pseudomonas testosteroni and analysis of the 4,5-dihydroxyphthalate decarboxylase gene.</title>
        <authorList>
            <person name="Lee J."/>
            <person name="Omori T."/>
            <person name="Kodama T."/>
        </authorList>
    </citation>
    <scope>NUCLEOTIDE SEQUENCE [GENOMIC DNA]</scope>
    <source>
        <strain>M4-1</strain>
    </source>
</reference>
<comment type="catalytic activity">
    <reaction>
        <text>4,5-dihydroxyphthalate + H(+) = 3,4-dihydroxybenzoate + CO2</text>
        <dbReference type="Rhea" id="RHEA:24184"/>
        <dbReference type="ChEBI" id="CHEBI:15378"/>
        <dbReference type="ChEBI" id="CHEBI:16526"/>
        <dbReference type="ChEBI" id="CHEBI:36241"/>
        <dbReference type="ChEBI" id="CHEBI:58051"/>
        <dbReference type="EC" id="4.1.1.55"/>
    </reaction>
</comment>
<comment type="pathway">
    <text>Xenobiotic degradation; phthalate degradation; 3,4-dihydroxybenzoate from phthalate: step 3/3.</text>
</comment>
<comment type="similarity">
    <text evidence="1">To P.putida DHP decarboxylase.</text>
</comment>
<sequence length="330" mass="37156">MSKLQLSIAVGNYDRMRPLIDGDVQIDGVDPVFMLQDPEEIFFRAFRTADYDICELSLSSYSVKTAAGTSPYIAVPVFPSRAFRHSSVYVRADRGINSPADLKGKRIGVPEYQLTANVWVRMFLEEEYGVKASDIQWVRGGYEDPTRIEKISLKLPEGVSLVNAPEGRTISNLLADGEIDGVIGPRAPSCFDRGHPQVKYLFEDPQKAAAEWYERRKLFPIMHTLGVRKTLAEQHPWLPGALVKAFEHSKAVALTRLSDTSATKVTLPFIEDQLRNARRLMGQDFWSYGFAENAHVVDRFLARDHAEGLSSRRLQPAELFHPASLESFKI</sequence>
<evidence type="ECO:0000305" key="1"/>
<accession>Q59727</accession>
<protein>
    <recommendedName>
        <fullName>4,5-dihydroxyphthalate decarboxylase</fullName>
        <shortName>DHP decarboxylase</shortName>
        <ecNumber>4.1.1.55</ecNumber>
    </recommendedName>
</protein>
<organism>
    <name type="scientific">Comamonas testosteroni</name>
    <name type="common">Pseudomonas testosteroni</name>
    <dbReference type="NCBI Taxonomy" id="285"/>
    <lineage>
        <taxon>Bacteria</taxon>
        <taxon>Pseudomonadati</taxon>
        <taxon>Pseudomonadota</taxon>
        <taxon>Betaproteobacteria</taxon>
        <taxon>Burkholderiales</taxon>
        <taxon>Comamonadaceae</taxon>
        <taxon>Comamonas</taxon>
    </lineage>
</organism>